<keyword id="KW-0025">Alternative splicing</keyword>
<keyword id="KW-0150">Chloroplast</keyword>
<keyword id="KW-1015">Disulfide bond</keyword>
<keyword id="KW-0249">Electron transport</keyword>
<keyword id="KW-0560">Oxidoreductase</keyword>
<keyword id="KW-0934">Plastid</keyword>
<keyword id="KW-0676">Redox-active center</keyword>
<keyword id="KW-1185">Reference proteome</keyword>
<keyword id="KW-0809">Transit peptide</keyword>
<keyword id="KW-0813">Transport</keyword>
<gene>
    <name evidence="11" type="primary">CITRX</name>
    <name evidence="14" type="synonym">PAP10</name>
    <name evidence="12" type="synonym">TRX P</name>
    <name evidence="13" type="synonym">TRX Z</name>
    <name evidence="17" type="ordered locus">At3g06730</name>
    <name evidence="18" type="ORF">F3E22.13</name>
</gene>
<organism>
    <name type="scientific">Arabidopsis thaliana</name>
    <name type="common">Mouse-ear cress</name>
    <dbReference type="NCBI Taxonomy" id="3702"/>
    <lineage>
        <taxon>Eukaryota</taxon>
        <taxon>Viridiplantae</taxon>
        <taxon>Streptophyta</taxon>
        <taxon>Embryophyta</taxon>
        <taxon>Tracheophyta</taxon>
        <taxon>Spermatophyta</taxon>
        <taxon>Magnoliopsida</taxon>
        <taxon>eudicotyledons</taxon>
        <taxon>Gunneridae</taxon>
        <taxon>Pentapetalae</taxon>
        <taxon>rosids</taxon>
        <taxon>malvids</taxon>
        <taxon>Brassicales</taxon>
        <taxon>Brassicaceae</taxon>
        <taxon>Camelineae</taxon>
        <taxon>Arabidopsis</taxon>
    </lineage>
</organism>
<proteinExistence type="evidence at protein level"/>
<name>CITRX_ARATH</name>
<sequence length="183" mass="20670">MALVQSRTFPHLNTPLSPILSSLHAPSSLFIRREIRPVAAPFSSSTAGNLPFSPLTRPRKLLCPPPRGKFVREDYLVKKLSAQELQELVKGDRKVPLIVDFYATWCGPCILMAQELEMLAVEYESNAIIVKVDTDDEYEFARDMQVRGLPTLFFISPDPSKDAIRTEGLIPLQMMHDIIDNEM</sequence>
<feature type="transit peptide" description="Chloroplast" evidence="2">
    <location>
        <begin position="1"/>
        <end position="81"/>
    </location>
</feature>
<feature type="chain" id="PRO_0000394545" description="Thioredoxin-like protein CITRX, chloroplastic">
    <location>
        <begin position="82"/>
        <end position="183"/>
    </location>
</feature>
<feature type="domain" description="Thioredoxin" evidence="3">
    <location>
        <begin position="82"/>
        <end position="183"/>
    </location>
</feature>
<feature type="active site" description="Nucleophile" evidence="1">
    <location>
        <position position="106"/>
    </location>
</feature>
<feature type="active site" description="Nucleophile" evidence="1">
    <location>
        <position position="109"/>
    </location>
</feature>
<feature type="site" description="Deprotonates C-terminal active site Cys" evidence="1">
    <location>
        <position position="100"/>
    </location>
</feature>
<feature type="site" description="Contributes to redox potential value" evidence="1">
    <location>
        <position position="107"/>
    </location>
</feature>
<feature type="site" description="Contributes to redox potential value" evidence="1">
    <location>
        <position position="108"/>
    </location>
</feature>
<feature type="disulfide bond" description="Redox-active" evidence="3">
    <location>
        <begin position="106"/>
        <end position="109"/>
    </location>
</feature>
<feature type="splice variant" id="VSP_039287" description="In isoform 2." evidence="10">
    <original>RGLPTLFFISPDPSKDAIRTEGLI</original>
    <variation>YCNLQLMFLNFMNLLSAYQCKFLH</variation>
    <location>
        <begin position="147"/>
        <end position="170"/>
    </location>
</feature>
<feature type="splice variant" id="VSP_039288" description="In isoform 2." evidence="10">
    <location>
        <begin position="171"/>
        <end position="183"/>
    </location>
</feature>
<feature type="mutagenesis site" description="Strongly reduces the interaction with FLN1 or FLN2." evidence="6">
    <original>C</original>
    <variation>S</variation>
    <location>
        <position position="106"/>
    </location>
</feature>
<feature type="mutagenesis site" description="Does not affect the interaction with FLN1 or FLN2." evidence="6">
    <original>C</original>
    <variation>S</variation>
    <location>
        <position position="109"/>
    </location>
</feature>
<feature type="sequence conflict" description="In Ref. 5; AAM61520." evidence="15" ref="5">
    <original>F</original>
    <variation>L</variation>
    <location>
        <position position="9"/>
    </location>
</feature>
<protein>
    <recommendedName>
        <fullName evidence="15">Thioredoxin-like protein CITRX, chloroplastic</fullName>
        <ecNumber evidence="6">1.8.-.-</ecNumber>
    </recommendedName>
    <alternativeName>
        <fullName evidence="9">Cf-9-interacting thioredoxin</fullName>
        <shortName evidence="9">AtCiTrx</shortName>
    </alternativeName>
    <alternativeName>
        <fullName evidence="14">PEP-associated protein 10</fullName>
    </alternativeName>
    <alternativeName>
        <fullName evidence="12">Thioredoxin Trx p</fullName>
    </alternativeName>
    <alternativeName>
        <fullName evidence="13">Thioredoxin Z</fullName>
    </alternativeName>
</protein>
<evidence type="ECO:0000250" key="1">
    <source>
        <dbReference type="UniProtKB" id="P10599"/>
    </source>
</evidence>
<evidence type="ECO:0000255" key="2"/>
<evidence type="ECO:0000255" key="3">
    <source>
        <dbReference type="PROSITE-ProRule" id="PRU00691"/>
    </source>
</evidence>
<evidence type="ECO:0000269" key="4">
    <source>
    </source>
</evidence>
<evidence type="ECO:0000269" key="5">
    <source>
    </source>
</evidence>
<evidence type="ECO:0000269" key="6">
    <source>
    </source>
</evidence>
<evidence type="ECO:0000269" key="7">
    <source>
    </source>
</evidence>
<evidence type="ECO:0000269" key="8">
    <source>
    </source>
</evidence>
<evidence type="ECO:0000303" key="9">
    <source>
    </source>
</evidence>
<evidence type="ECO:0000303" key="10">
    <source>
    </source>
</evidence>
<evidence type="ECO:0000303" key="11">
    <source>
    </source>
</evidence>
<evidence type="ECO:0000303" key="12">
    <source>
    </source>
</evidence>
<evidence type="ECO:0000303" key="13">
    <source>
    </source>
</evidence>
<evidence type="ECO:0000303" key="14">
    <source>
    </source>
</evidence>
<evidence type="ECO:0000305" key="15"/>
<evidence type="ECO:0000305" key="16">
    <source>
    </source>
</evidence>
<evidence type="ECO:0000312" key="17">
    <source>
        <dbReference type="Araport" id="AT3G06730"/>
    </source>
</evidence>
<evidence type="ECO:0000312" key="18">
    <source>
        <dbReference type="EMBL" id="AAF63825.1"/>
    </source>
</evidence>
<comment type="function">
    <text evidence="4 5 6 7">Thiol-disulfide oxidoreductase that plays a role in proper chloroplast development, most likely through regulating plastid-encoded polymerase (PEP) dependent chloroplast transcription. Acts as a component of the transcriptionally active plastid chromosome that is required for plastid gene expression.</text>
</comment>
<comment type="subunit">
    <text evidence="6 8">Interacts with FLN1 and FLN2 (PubMed:20511297). Interacts with MRL7 (PubMed:23956074).</text>
</comment>
<comment type="interaction">
    <interactant intactId="EBI-9823626">
        <id>Q9M7X9</id>
    </interactant>
    <interactant intactId="EBI-9823647">
        <id>Q9M394</id>
        <label>FLN1</label>
    </interactant>
    <organismsDiffer>false</organismsDiffer>
    <experiments>3</experiments>
</comment>
<comment type="interaction">
    <interactant intactId="EBI-9823626">
        <id>Q9M7X9</id>
    </interactant>
    <interactant intactId="EBI-9823671">
        <id>F4I0K2</id>
        <label>FLN2</label>
    </interactant>
    <organismsDiffer>false</organismsDiffer>
    <experiments>3</experiments>
</comment>
<comment type="subcellular location">
    <subcellularLocation>
        <location evidence="5 6">Plastid</location>
        <location evidence="5 6">Chloroplast</location>
    </subcellularLocation>
</comment>
<comment type="alternative products">
    <event type="alternative splicing"/>
    <isoform>
        <id>Q9M7X9-1</id>
        <name>1</name>
        <sequence type="displayed"/>
    </isoform>
    <isoform>
        <id>Q9M7X9-2</id>
        <name>2</name>
        <sequence type="described" ref="VSP_039287 VSP_039288"/>
    </isoform>
</comment>
<comment type="disruption phenotype">
    <text evidence="5 6">Albino seedlings leading to lethality. Abnormal plastids lacking internal membrane structures.</text>
</comment>
<comment type="miscellaneous">
    <molecule>Isoform 2</molecule>
    <text evidence="15">May be due to intron retention.</text>
</comment>
<comment type="similarity">
    <text evidence="15">Belongs to the thioredoxin family. Plant CITRX-type subfamily.</text>
</comment>
<comment type="caution">
    <text evidence="16">The article has been retracted, because it has become clear that the thioredoxin that interacts in yeast 2-hybrid with the Cf-9 C-terminus is in fact localized in the chloroplast, rendering a role in Cf-9 signaling unlikely. All the authors agree that this paper should be withdrawn from the scientific literature.</text>
</comment>
<reference key="1">
    <citation type="journal article" date="2000" name="Nature">
        <title>Sequence and analysis of chromosome 3 of the plant Arabidopsis thaliana.</title>
        <authorList>
            <person name="Salanoubat M."/>
            <person name="Lemcke K."/>
            <person name="Rieger M."/>
            <person name="Ansorge W."/>
            <person name="Unseld M."/>
            <person name="Fartmann B."/>
            <person name="Valle G."/>
            <person name="Bloecker H."/>
            <person name="Perez-Alonso M."/>
            <person name="Obermaier B."/>
            <person name="Delseny M."/>
            <person name="Boutry M."/>
            <person name="Grivell L.A."/>
            <person name="Mache R."/>
            <person name="Puigdomenech P."/>
            <person name="De Simone V."/>
            <person name="Choisne N."/>
            <person name="Artiguenave F."/>
            <person name="Robert C."/>
            <person name="Brottier P."/>
            <person name="Wincker P."/>
            <person name="Cattolico L."/>
            <person name="Weissenbach J."/>
            <person name="Saurin W."/>
            <person name="Quetier F."/>
            <person name="Schaefer M."/>
            <person name="Mueller-Auer S."/>
            <person name="Gabel C."/>
            <person name="Fuchs M."/>
            <person name="Benes V."/>
            <person name="Wurmbach E."/>
            <person name="Drzonek H."/>
            <person name="Erfle H."/>
            <person name="Jordan N."/>
            <person name="Bangert S."/>
            <person name="Wiedelmann R."/>
            <person name="Kranz H."/>
            <person name="Voss H."/>
            <person name="Holland R."/>
            <person name="Brandt P."/>
            <person name="Nyakatura G."/>
            <person name="Vezzi A."/>
            <person name="D'Angelo M."/>
            <person name="Pallavicini A."/>
            <person name="Toppo S."/>
            <person name="Simionati B."/>
            <person name="Conrad A."/>
            <person name="Hornischer K."/>
            <person name="Kauer G."/>
            <person name="Loehnert T.-H."/>
            <person name="Nordsiek G."/>
            <person name="Reichelt J."/>
            <person name="Scharfe M."/>
            <person name="Schoen O."/>
            <person name="Bargues M."/>
            <person name="Terol J."/>
            <person name="Climent J."/>
            <person name="Navarro P."/>
            <person name="Collado C."/>
            <person name="Perez-Perez A."/>
            <person name="Ottenwaelder B."/>
            <person name="Duchemin D."/>
            <person name="Cooke R."/>
            <person name="Laudie M."/>
            <person name="Berger-Llauro C."/>
            <person name="Purnelle B."/>
            <person name="Masuy D."/>
            <person name="de Haan M."/>
            <person name="Maarse A.C."/>
            <person name="Alcaraz J.-P."/>
            <person name="Cottet A."/>
            <person name="Casacuberta E."/>
            <person name="Monfort A."/>
            <person name="Argiriou A."/>
            <person name="Flores M."/>
            <person name="Liguori R."/>
            <person name="Vitale D."/>
            <person name="Mannhaupt G."/>
            <person name="Haase D."/>
            <person name="Schoof H."/>
            <person name="Rudd S."/>
            <person name="Zaccaria P."/>
            <person name="Mewes H.-W."/>
            <person name="Mayer K.F.X."/>
            <person name="Kaul S."/>
            <person name="Town C.D."/>
            <person name="Koo H.L."/>
            <person name="Tallon L.J."/>
            <person name="Jenkins J."/>
            <person name="Rooney T."/>
            <person name="Rizzo M."/>
            <person name="Walts A."/>
            <person name="Utterback T."/>
            <person name="Fujii C.Y."/>
            <person name="Shea T.P."/>
            <person name="Creasy T.H."/>
            <person name="Haas B."/>
            <person name="Maiti R."/>
            <person name="Wu D."/>
            <person name="Peterson J."/>
            <person name="Van Aken S."/>
            <person name="Pai G."/>
            <person name="Militscher J."/>
            <person name="Sellers P."/>
            <person name="Gill J.E."/>
            <person name="Feldblyum T.V."/>
            <person name="Preuss D."/>
            <person name="Lin X."/>
            <person name="Nierman W.C."/>
            <person name="Salzberg S.L."/>
            <person name="White O."/>
            <person name="Venter J.C."/>
            <person name="Fraser C.M."/>
            <person name="Kaneko T."/>
            <person name="Nakamura Y."/>
            <person name="Sato S."/>
            <person name="Kato T."/>
            <person name="Asamizu E."/>
            <person name="Sasamoto S."/>
            <person name="Kimura T."/>
            <person name="Idesawa K."/>
            <person name="Kawashima K."/>
            <person name="Kishida Y."/>
            <person name="Kiyokawa C."/>
            <person name="Kohara M."/>
            <person name="Matsumoto M."/>
            <person name="Matsuno A."/>
            <person name="Muraki A."/>
            <person name="Nakayama S."/>
            <person name="Nakazaki N."/>
            <person name="Shinpo S."/>
            <person name="Takeuchi C."/>
            <person name="Wada T."/>
            <person name="Watanabe A."/>
            <person name="Yamada M."/>
            <person name="Yasuda M."/>
            <person name="Tabata S."/>
        </authorList>
    </citation>
    <scope>NUCLEOTIDE SEQUENCE [LARGE SCALE GENOMIC DNA]</scope>
    <source>
        <strain>cv. Columbia</strain>
    </source>
</reference>
<reference key="2">
    <citation type="journal article" date="2017" name="Plant J.">
        <title>Araport11: a complete reannotation of the Arabidopsis thaliana reference genome.</title>
        <authorList>
            <person name="Cheng C.Y."/>
            <person name="Krishnakumar V."/>
            <person name="Chan A.P."/>
            <person name="Thibaud-Nissen F."/>
            <person name="Schobel S."/>
            <person name="Town C.D."/>
        </authorList>
    </citation>
    <scope>GENOME REANNOTATION</scope>
    <source>
        <strain>cv. Columbia</strain>
    </source>
</reference>
<reference key="3">
    <citation type="journal article" date="2003" name="Science">
        <title>Empirical analysis of transcriptional activity in the Arabidopsis genome.</title>
        <authorList>
            <person name="Yamada K."/>
            <person name="Lim J."/>
            <person name="Dale J.M."/>
            <person name="Chen H."/>
            <person name="Shinn P."/>
            <person name="Palm C.J."/>
            <person name="Southwick A.M."/>
            <person name="Wu H.C."/>
            <person name="Kim C.J."/>
            <person name="Nguyen M."/>
            <person name="Pham P.K."/>
            <person name="Cheuk R.F."/>
            <person name="Karlin-Newmann G."/>
            <person name="Liu S.X."/>
            <person name="Lam B."/>
            <person name="Sakano H."/>
            <person name="Wu T."/>
            <person name="Yu G."/>
            <person name="Miranda M."/>
            <person name="Quach H.L."/>
            <person name="Tripp M."/>
            <person name="Chang C.H."/>
            <person name="Lee J.M."/>
            <person name="Toriumi M.J."/>
            <person name="Chan M.M."/>
            <person name="Tang C.C."/>
            <person name="Onodera C.S."/>
            <person name="Deng J.M."/>
            <person name="Akiyama K."/>
            <person name="Ansari Y."/>
            <person name="Arakawa T."/>
            <person name="Banh J."/>
            <person name="Banno F."/>
            <person name="Bowser L."/>
            <person name="Brooks S.Y."/>
            <person name="Carninci P."/>
            <person name="Chao Q."/>
            <person name="Choy N."/>
            <person name="Enju A."/>
            <person name="Goldsmith A.D."/>
            <person name="Gurjal M."/>
            <person name="Hansen N.F."/>
            <person name="Hayashizaki Y."/>
            <person name="Johnson-Hopson C."/>
            <person name="Hsuan V.W."/>
            <person name="Iida K."/>
            <person name="Karnes M."/>
            <person name="Khan S."/>
            <person name="Koesema E."/>
            <person name="Ishida J."/>
            <person name="Jiang P.X."/>
            <person name="Jones T."/>
            <person name="Kawai J."/>
            <person name="Kamiya A."/>
            <person name="Meyers C."/>
            <person name="Nakajima M."/>
            <person name="Narusaka M."/>
            <person name="Seki M."/>
            <person name="Sakurai T."/>
            <person name="Satou M."/>
            <person name="Tamse R."/>
            <person name="Vaysberg M."/>
            <person name="Wallender E.K."/>
            <person name="Wong C."/>
            <person name="Yamamura Y."/>
            <person name="Yuan S."/>
            <person name="Shinozaki K."/>
            <person name="Davis R.W."/>
            <person name="Theologis A."/>
            <person name="Ecker J.R."/>
        </authorList>
    </citation>
    <scope>NUCLEOTIDE SEQUENCE [LARGE SCALE MRNA] (ISOFORM 1)</scope>
    <source>
        <strain>cv. Columbia</strain>
    </source>
</reference>
<reference key="4">
    <citation type="journal article" date="2009" name="DNA Res.">
        <title>Analysis of multiple occurrences of alternative splicing events in Arabidopsis thaliana using novel sequenced full-length cDNAs.</title>
        <authorList>
            <person name="Iida K."/>
            <person name="Fukami-Kobayashi K."/>
            <person name="Toyoda A."/>
            <person name="Sakaki Y."/>
            <person name="Kobayashi M."/>
            <person name="Seki M."/>
            <person name="Shinozaki K."/>
        </authorList>
    </citation>
    <scope>NUCLEOTIDE SEQUENCE [LARGE SCALE MRNA] (ISOFORM 2)</scope>
    <source>
        <strain>cv. Columbia</strain>
    </source>
</reference>
<reference key="5">
    <citation type="submission" date="2002-03" db="EMBL/GenBank/DDBJ databases">
        <title>Full-length cDNA from Arabidopsis thaliana.</title>
        <authorList>
            <person name="Brover V.V."/>
            <person name="Troukhan M.E."/>
            <person name="Alexandrov N.A."/>
            <person name="Lu Y.-P."/>
            <person name="Flavell R.B."/>
            <person name="Feldmann K.A."/>
        </authorList>
    </citation>
    <scope>NUCLEOTIDE SEQUENCE [LARGE SCALE MRNA] (ISOFORM 1)</scope>
</reference>
<reference key="6">
    <citation type="journal article" date="2004" name="EMBO J.">
        <title>CITRX thioredoxin interacts with the tomato Cf-9 resistance protein and negatively regulates defence.</title>
        <authorList>
            <person name="Rivas S."/>
            <person name="Rougon-Cardoso A."/>
            <person name="Smoker M."/>
            <person name="Schauser L."/>
            <person name="Yoshioka H."/>
            <person name="Jones J.D."/>
        </authorList>
    </citation>
    <scope>RETRACTED PAPER</scope>
</reference>
<reference key="7">
    <citation type="journal article" date="2019" name="EMBO J.">
        <authorList>
            <person name="Rivas S."/>
            <person name="Rougon-Cardoso A."/>
            <person name="Smoker M."/>
            <person name="Schauser L."/>
            <person name="Yoshioka H."/>
            <person name="Jones J.D."/>
        </authorList>
    </citation>
    <scope>RETRACTION NOTICE OF PUBMED:15131698</scope>
</reference>
<reference key="8">
    <citation type="journal article" date="2006" name="Plant Cell">
        <title>pTAC2, -6, and -12 are components of the transcriptionally active plastid chromosome that are required for plastid gene expression.</title>
        <authorList>
            <person name="Pfalz J."/>
            <person name="Liere K."/>
            <person name="Kandlbinder A."/>
            <person name="Dietz K.-J."/>
            <person name="Oelmueller R."/>
        </authorList>
    </citation>
    <scope>FUNCTION</scope>
</reference>
<reference key="9">
    <citation type="journal article" date="2009" name="Mol. Plant">
        <title>Comparative genomic study of the thioredoxin family in photosynthetic organisms with emphasis on Populus trichocarpa.</title>
        <authorList>
            <person name="Chibani K."/>
            <person name="Wingsle G."/>
            <person name="Jacquot J.P."/>
            <person name="Gelhaye E."/>
            <person name="Rouhier N."/>
        </authorList>
    </citation>
    <scope>GENE FAMILY</scope>
    <scope>NOMENCLATURE</scope>
</reference>
<reference key="10">
    <citation type="journal article" date="2010" name="Plant Cell">
        <title>Plastidial thioredoxin z interacts with two fructokinase-like proteins in a thiol-dependent manner: evidence for an essential role in chloroplast development in Arabidopsis and Nicotiana benthamiana.</title>
        <authorList>
            <person name="Arsova B."/>
            <person name="Hoja U."/>
            <person name="Wimmelbacher M."/>
            <person name="Greiner E."/>
            <person name="Ustun S."/>
            <person name="Melzer M."/>
            <person name="Petersen K."/>
            <person name="Lein W."/>
            <person name="Bornke F."/>
        </authorList>
    </citation>
    <scope>FUNCTION</scope>
    <scope>DISRUPTION PHENOTYPE</scope>
    <scope>SUBCELLULAR LOCATION</scope>
    <scope>INTERACTION WITH FLN1 AND FLN2</scope>
    <scope>MUTAGENESIS OF CYS-106 AND CYS-109</scope>
</reference>
<reference key="11">
    <citation type="journal article" date="2010" name="Proc. Natl. Acad. Sci. U.S.A.">
        <title>A membrane-associated thioredoxin required for plant growth moves from cell to cell, suggestive of a role in intercellular communication.</title>
        <authorList>
            <person name="Meng L."/>
            <person name="Wong J.H."/>
            <person name="Feldman L.J."/>
            <person name="Lemaux P.G."/>
            <person name="Buchanan B.B."/>
        </authorList>
    </citation>
    <scope>FUNCTION</scope>
    <scope>SUBCELLULAR LOCATION</scope>
    <scope>DISRUPTION PHENOTYPE</scope>
</reference>
<reference key="12">
    <citation type="journal article" date="2011" name="Plant Physiol.">
        <title>Identification of essential subunits in the plastid-encoded RNA polymerase complex reveals building blocks for proper plastid development.</title>
        <authorList>
            <person name="Steiner S."/>
            <person name="Schroeter Y."/>
            <person name="Pfalz J."/>
            <person name="Pfannschmidt T."/>
        </authorList>
    </citation>
    <scope>FUNCTION</scope>
    <scope>IDENTIFICATION BY MASS SPECTROMETRY</scope>
</reference>
<reference key="13">
    <citation type="journal article" date="2014" name="Mol. Plant">
        <title>AtECB1/MRL7, a thioredoxin-like fold protein with disulfide reductase activity, regulates chloroplast gene expression and chloroplast biogenesis in Arabidopsis thaliana.</title>
        <authorList>
            <person name="Yua Q.B."/>
            <person name="Ma Q."/>
            <person name="Kong M.M."/>
            <person name="Zhao T.T."/>
            <person name="Zhang X.L."/>
            <person name="Zhou Q."/>
            <person name="Huang C."/>
            <person name="Chong K."/>
            <person name="Yang Z.N."/>
        </authorList>
    </citation>
    <scope>INTERACTION WITH MRL7</scope>
</reference>
<accession>Q9M7X9</accession>
<accession>C0Z2V5</accession>
<accession>Q8LFA3</accession>
<dbReference type="EC" id="1.8.-.-" evidence="6"/>
<dbReference type="EMBL" id="AC023912">
    <property type="protein sequence ID" value="AAF63825.1"/>
    <property type="molecule type" value="Genomic_DNA"/>
</dbReference>
<dbReference type="EMBL" id="CP002686">
    <property type="protein sequence ID" value="AEE74449.1"/>
    <property type="molecule type" value="Genomic_DNA"/>
</dbReference>
<dbReference type="EMBL" id="AF370315">
    <property type="protein sequence ID" value="AAK44130.1"/>
    <property type="molecule type" value="mRNA"/>
</dbReference>
<dbReference type="EMBL" id="AY063100">
    <property type="protein sequence ID" value="AAL34274.1"/>
    <property type="molecule type" value="mRNA"/>
</dbReference>
<dbReference type="EMBL" id="AK318919">
    <property type="protein sequence ID" value="BAH57034.1"/>
    <property type="molecule type" value="mRNA"/>
</dbReference>
<dbReference type="EMBL" id="AY084959">
    <property type="protein sequence ID" value="AAM61520.1"/>
    <property type="molecule type" value="mRNA"/>
</dbReference>
<dbReference type="RefSeq" id="NP_187329.1">
    <molecule id="Q9M7X9-1"/>
    <property type="nucleotide sequence ID" value="NM_111553.4"/>
</dbReference>
<dbReference type="SMR" id="Q9M7X9"/>
<dbReference type="BioGRID" id="5193">
    <property type="interactions" value="10"/>
</dbReference>
<dbReference type="FunCoup" id="Q9M7X9">
    <property type="interactions" value="545"/>
</dbReference>
<dbReference type="IntAct" id="Q9M7X9">
    <property type="interactions" value="3"/>
</dbReference>
<dbReference type="STRING" id="3702.Q9M7X9"/>
<dbReference type="PaxDb" id="3702-AT3G06730.1"/>
<dbReference type="ProteomicsDB" id="246867">
    <molecule id="Q9M7X9-1"/>
</dbReference>
<dbReference type="EnsemblPlants" id="AT3G06730.1">
    <molecule id="Q9M7X9-1"/>
    <property type="protein sequence ID" value="AT3G06730.1"/>
    <property type="gene ID" value="AT3G06730"/>
</dbReference>
<dbReference type="GeneID" id="819858"/>
<dbReference type="Gramene" id="AT3G06730.1">
    <molecule id="Q9M7X9-1"/>
    <property type="protein sequence ID" value="AT3G06730.1"/>
    <property type="gene ID" value="AT3G06730"/>
</dbReference>
<dbReference type="KEGG" id="ath:AT3G06730"/>
<dbReference type="Araport" id="AT3G06730"/>
<dbReference type="TAIR" id="AT3G06730">
    <property type="gene designation" value="TRX Z"/>
</dbReference>
<dbReference type="eggNOG" id="KOG0907">
    <property type="taxonomic scope" value="Eukaryota"/>
</dbReference>
<dbReference type="HOGENOM" id="CLU_110012_1_0_1"/>
<dbReference type="InParanoid" id="Q9M7X9"/>
<dbReference type="OMA" id="DEYEFAQ"/>
<dbReference type="PhylomeDB" id="Q9M7X9"/>
<dbReference type="CD-CODE" id="4299E36E">
    <property type="entry name" value="Nucleolus"/>
</dbReference>
<dbReference type="PRO" id="PR:Q9M7X9"/>
<dbReference type="Proteomes" id="UP000006548">
    <property type="component" value="Chromosome 3"/>
</dbReference>
<dbReference type="ExpressionAtlas" id="Q9M7X9">
    <property type="expression patterns" value="baseline and differential"/>
</dbReference>
<dbReference type="GO" id="GO:0009507">
    <property type="term" value="C:chloroplast"/>
    <property type="evidence" value="ECO:0000314"/>
    <property type="project" value="TAIR"/>
</dbReference>
<dbReference type="GO" id="GO:0042644">
    <property type="term" value="C:chloroplast nucleoid"/>
    <property type="evidence" value="ECO:0007005"/>
    <property type="project" value="TAIR"/>
</dbReference>
<dbReference type="GO" id="GO:0009579">
    <property type="term" value="C:thylakoid"/>
    <property type="evidence" value="ECO:0007005"/>
    <property type="project" value="TAIR"/>
</dbReference>
<dbReference type="GO" id="GO:0047134">
    <property type="term" value="F:protein-disulfide reductase [NAD(P)H] activity"/>
    <property type="evidence" value="ECO:0000314"/>
    <property type="project" value="TAIR"/>
</dbReference>
<dbReference type="GO" id="GO:0015035">
    <property type="term" value="F:protein-disulfide reductase activity"/>
    <property type="evidence" value="ECO:0000314"/>
    <property type="project" value="TAIR"/>
</dbReference>
<dbReference type="GO" id="GO:0045454">
    <property type="term" value="P:cell redox homeostasis"/>
    <property type="evidence" value="ECO:0000315"/>
    <property type="project" value="TAIR"/>
</dbReference>
<dbReference type="GO" id="GO:0009657">
    <property type="term" value="P:plastid organization"/>
    <property type="evidence" value="ECO:0000315"/>
    <property type="project" value="TAIR"/>
</dbReference>
<dbReference type="CDD" id="cd02947">
    <property type="entry name" value="TRX_family"/>
    <property type="match status" value="1"/>
</dbReference>
<dbReference type="FunFam" id="3.40.30.10:FF:000149">
    <property type="entry name" value="Thioredoxin-like protein CITRX, chloroplastic"/>
    <property type="match status" value="1"/>
</dbReference>
<dbReference type="Gene3D" id="3.40.30.10">
    <property type="entry name" value="Glutaredoxin"/>
    <property type="match status" value="1"/>
</dbReference>
<dbReference type="InterPro" id="IPR044182">
    <property type="entry name" value="CITRX"/>
</dbReference>
<dbReference type="InterPro" id="IPR036249">
    <property type="entry name" value="Thioredoxin-like_sf"/>
</dbReference>
<dbReference type="InterPro" id="IPR013766">
    <property type="entry name" value="Thioredoxin_domain"/>
</dbReference>
<dbReference type="PANTHER" id="PTHR47834">
    <property type="entry name" value="THIOREDOXIN-LIKE PROTEIN CITRX, CHLOROPLASTIC"/>
    <property type="match status" value="1"/>
</dbReference>
<dbReference type="PANTHER" id="PTHR47834:SF2">
    <property type="entry name" value="THIOREDOXIN-LIKE PROTEIN CITRX, CHLOROPLASTIC"/>
    <property type="match status" value="1"/>
</dbReference>
<dbReference type="Pfam" id="PF00085">
    <property type="entry name" value="Thioredoxin"/>
    <property type="match status" value="1"/>
</dbReference>
<dbReference type="PRINTS" id="PR00421">
    <property type="entry name" value="THIOREDOXIN"/>
</dbReference>
<dbReference type="SUPFAM" id="SSF52833">
    <property type="entry name" value="Thioredoxin-like"/>
    <property type="match status" value="1"/>
</dbReference>
<dbReference type="PROSITE" id="PS51352">
    <property type="entry name" value="THIOREDOXIN_2"/>
    <property type="match status" value="1"/>
</dbReference>